<reference evidence="6 7" key="1">
    <citation type="journal article" date="2009" name="Plant Cell Rep.">
        <title>Constitutive expression of bergaptol O-methyltransferase in Glehnia littoralis cell cultures.</title>
        <authorList>
            <person name="Ishikawa A."/>
            <person name="Kuma T."/>
            <person name="Sasaki H."/>
            <person name="Sasaki N."/>
            <person name="Ozeki Y."/>
            <person name="Kobayashi N."/>
            <person name="Kitamura Y."/>
        </authorList>
    </citation>
    <scope>NUCLEOTIDE SEQUENCE [MRNA]</scope>
    <scope>CATALYTIC ACTIVITY</scope>
    <scope>BIOPHYSICOCHEMICAL PROPERTIES</scope>
    <scope>INDUCTION</scope>
</reference>
<name>BMT_GLELI</name>
<sequence>MAGMKSSPSQDEEACVLAIQLATSTVLPMILKSAIELDILNTISKAGPGNYLSPSDLASKLLMSNPHAPIMLERILRVLATYKVLGCKRSELSNGEVEWLYCWTPVCKFLSNNEDGASIAPLLLVHQDKVPMKSWYHLTDAVLDGGTAFNKAYGMNIFDYASQDPQFNKVFNRSMAGHSTITMKKIVETYNGFEGLKSIVDVGGGSGATLNMIISKYPTIKGINFDLPHVVGDSPIHPGVEHVGGDMFASVPKGDAIFLKWIFHSWSDEDCLRILKNCYEALADNKKVIVAEFIIPEVPGGSDDATKSVVHLDAIMLAYVPGGKERTEKEFESLATRAGFKSFRKVCCAFNTWIMEFSK</sequence>
<dbReference type="EC" id="2.1.1.69"/>
<dbReference type="EMBL" id="AB363638">
    <property type="protein sequence ID" value="BAF81987.1"/>
    <property type="molecule type" value="mRNA"/>
</dbReference>
<dbReference type="SMR" id="A8J6X1"/>
<dbReference type="GO" id="GO:0030752">
    <property type="term" value="F:5-hydroxyfuranocoumarin 5-O-methyltransferase activity"/>
    <property type="evidence" value="ECO:0007669"/>
    <property type="project" value="UniProtKB-EC"/>
</dbReference>
<dbReference type="GO" id="GO:0008171">
    <property type="term" value="F:O-methyltransferase activity"/>
    <property type="evidence" value="ECO:0007669"/>
    <property type="project" value="InterPro"/>
</dbReference>
<dbReference type="GO" id="GO:0046983">
    <property type="term" value="F:protein dimerization activity"/>
    <property type="evidence" value="ECO:0007669"/>
    <property type="project" value="InterPro"/>
</dbReference>
<dbReference type="GO" id="GO:0032259">
    <property type="term" value="P:methylation"/>
    <property type="evidence" value="ECO:0007669"/>
    <property type="project" value="UniProtKB-KW"/>
</dbReference>
<dbReference type="CDD" id="cd02440">
    <property type="entry name" value="AdoMet_MTases"/>
    <property type="match status" value="1"/>
</dbReference>
<dbReference type="FunFam" id="1.10.10.10:FF:000357">
    <property type="entry name" value="Caffeic acid 3-O-methyltransferase"/>
    <property type="match status" value="1"/>
</dbReference>
<dbReference type="FunFam" id="3.40.50.150:FF:000061">
    <property type="entry name" value="Caffeic acid O-methyltransferase"/>
    <property type="match status" value="1"/>
</dbReference>
<dbReference type="Gene3D" id="3.40.50.150">
    <property type="entry name" value="Vaccinia Virus protein VP39"/>
    <property type="match status" value="1"/>
</dbReference>
<dbReference type="Gene3D" id="1.10.10.10">
    <property type="entry name" value="Winged helix-like DNA-binding domain superfamily/Winged helix DNA-binding domain"/>
    <property type="match status" value="1"/>
</dbReference>
<dbReference type="InterPro" id="IPR016461">
    <property type="entry name" value="COMT-like"/>
</dbReference>
<dbReference type="InterPro" id="IPR001077">
    <property type="entry name" value="O_MeTrfase_dom"/>
</dbReference>
<dbReference type="InterPro" id="IPR012967">
    <property type="entry name" value="Plant_O-MeTrfase_dimerisation"/>
</dbReference>
<dbReference type="InterPro" id="IPR029063">
    <property type="entry name" value="SAM-dependent_MTases_sf"/>
</dbReference>
<dbReference type="InterPro" id="IPR036388">
    <property type="entry name" value="WH-like_DNA-bd_sf"/>
</dbReference>
<dbReference type="InterPro" id="IPR036390">
    <property type="entry name" value="WH_DNA-bd_sf"/>
</dbReference>
<dbReference type="PANTHER" id="PTHR11746">
    <property type="entry name" value="O-METHYLTRANSFERASE"/>
    <property type="match status" value="1"/>
</dbReference>
<dbReference type="Pfam" id="PF08100">
    <property type="entry name" value="Dimerisation"/>
    <property type="match status" value="1"/>
</dbReference>
<dbReference type="Pfam" id="PF00891">
    <property type="entry name" value="Methyltransf_2"/>
    <property type="match status" value="1"/>
</dbReference>
<dbReference type="PIRSF" id="PIRSF005739">
    <property type="entry name" value="O-mtase"/>
    <property type="match status" value="1"/>
</dbReference>
<dbReference type="SUPFAM" id="SSF53335">
    <property type="entry name" value="S-adenosyl-L-methionine-dependent methyltransferases"/>
    <property type="match status" value="1"/>
</dbReference>
<dbReference type="SUPFAM" id="SSF46785">
    <property type="entry name" value="Winged helix' DNA-binding domain"/>
    <property type="match status" value="1"/>
</dbReference>
<dbReference type="PROSITE" id="PS51683">
    <property type="entry name" value="SAM_OMT_II"/>
    <property type="match status" value="1"/>
</dbReference>
<organism>
    <name type="scientific">Glehnia littoralis</name>
    <name type="common">Beach silvertop</name>
    <name type="synonym">Phellopterus littoralis</name>
    <dbReference type="NCBI Taxonomy" id="48119"/>
    <lineage>
        <taxon>Eukaryota</taxon>
        <taxon>Viridiplantae</taxon>
        <taxon>Streptophyta</taxon>
        <taxon>Embryophyta</taxon>
        <taxon>Tracheophyta</taxon>
        <taxon>Spermatophyta</taxon>
        <taxon>Magnoliopsida</taxon>
        <taxon>eudicotyledons</taxon>
        <taxon>Gunneridae</taxon>
        <taxon>Pentapetalae</taxon>
        <taxon>asterids</taxon>
        <taxon>campanulids</taxon>
        <taxon>Apiales</taxon>
        <taxon>Apiaceae</taxon>
        <taxon>Apioideae</taxon>
        <taxon>apioid superclade</taxon>
        <taxon>Selineae</taxon>
        <taxon>Glehnia</taxon>
    </lineage>
</organism>
<evidence type="ECO:0000250" key="1">
    <source>
        <dbReference type="UniProtKB" id="A0A166U5H3"/>
    </source>
</evidence>
<evidence type="ECO:0000250" key="2">
    <source>
        <dbReference type="UniProtKB" id="Q6T1F6"/>
    </source>
</evidence>
<evidence type="ECO:0000255" key="3">
    <source>
        <dbReference type="PROSITE-ProRule" id="PRU01020"/>
    </source>
</evidence>
<evidence type="ECO:0000269" key="4">
    <source>
    </source>
</evidence>
<evidence type="ECO:0000303" key="5">
    <source>
    </source>
</evidence>
<evidence type="ECO:0000305" key="6"/>
<evidence type="ECO:0000312" key="7">
    <source>
        <dbReference type="EMBL" id="BAF81987.1"/>
    </source>
</evidence>
<accession>A8J6X1</accession>
<feature type="chain" id="PRO_0000401111" description="Bergaptol O-methyltransferase">
    <location>
        <begin position="1"/>
        <end position="359"/>
    </location>
</feature>
<feature type="active site" description="Proton acceptor" evidence="3">
    <location>
        <position position="264"/>
    </location>
</feature>
<feature type="binding site" evidence="1">
    <location>
        <position position="126"/>
    </location>
    <ligand>
        <name>bergaptol</name>
        <dbReference type="ChEBI" id="CHEBI:77728"/>
    </ligand>
</feature>
<feature type="binding site" evidence="1">
    <location>
        <position position="179"/>
    </location>
    <ligand>
        <name>S-adenosyl-L-homocysteine</name>
        <dbReference type="ChEBI" id="CHEBI:57856"/>
    </ligand>
</feature>
<feature type="binding site" evidence="1">
    <location>
        <position position="203"/>
    </location>
    <ligand>
        <name>S-adenosyl-L-homocysteine</name>
        <dbReference type="ChEBI" id="CHEBI:57856"/>
    </ligand>
</feature>
<feature type="binding site" evidence="1">
    <location>
        <position position="226"/>
    </location>
    <ligand>
        <name>S-adenosyl-L-homocysteine</name>
        <dbReference type="ChEBI" id="CHEBI:57856"/>
    </ligand>
</feature>
<feature type="binding site" evidence="1">
    <location>
        <position position="246"/>
    </location>
    <ligand>
        <name>S-adenosyl-L-homocysteine</name>
        <dbReference type="ChEBI" id="CHEBI:57856"/>
    </ligand>
</feature>
<feature type="binding site" evidence="1">
    <location>
        <position position="260"/>
    </location>
    <ligand>
        <name>S-adenosyl-L-homocysteine</name>
        <dbReference type="ChEBI" id="CHEBI:57856"/>
    </ligand>
</feature>
<feature type="binding site" evidence="1">
    <location>
        <position position="264"/>
    </location>
    <ligand>
        <name>bergaptol</name>
        <dbReference type="ChEBI" id="CHEBI:77728"/>
    </ligand>
</feature>
<protein>
    <recommendedName>
        <fullName evidence="7">Bergaptol O-methyltransferase</fullName>
        <shortName evidence="5">BMT</shortName>
        <ecNumber>2.1.1.69</ecNumber>
    </recommendedName>
</protein>
<proteinExistence type="evidence at protein level"/>
<comment type="catalytic activity">
    <reaction evidence="4">
        <text>a 5-hydroxyfurocoumarin + S-adenosyl-L-methionine = a 5-methoxyfurocoumarin + S-adenosyl-L-homocysteine + H(+)</text>
        <dbReference type="Rhea" id="RHEA:18861"/>
        <dbReference type="ChEBI" id="CHEBI:15378"/>
        <dbReference type="ChEBI" id="CHEBI:52058"/>
        <dbReference type="ChEBI" id="CHEBI:52061"/>
        <dbReference type="ChEBI" id="CHEBI:57856"/>
        <dbReference type="ChEBI" id="CHEBI:59789"/>
        <dbReference type="EC" id="2.1.1.69"/>
    </reaction>
</comment>
<comment type="catalytic activity">
    <reaction evidence="4">
        <text>bergaptol + S-adenosyl-L-methionine = bergapten + S-adenosyl-L-homocysteine</text>
        <dbReference type="Rhea" id="RHEA:11808"/>
        <dbReference type="ChEBI" id="CHEBI:18293"/>
        <dbReference type="ChEBI" id="CHEBI:57856"/>
        <dbReference type="ChEBI" id="CHEBI:59789"/>
        <dbReference type="ChEBI" id="CHEBI:77728"/>
        <dbReference type="EC" id="2.1.1.69"/>
    </reaction>
</comment>
<comment type="activity regulation">
    <text evidence="2">Inhibited by Cu(2+), Ni(2+) and Co(2+).</text>
</comment>
<comment type="biophysicochemical properties">
    <kinetics>
        <KM evidence="4">12.9 uM for bergaptol</KM>
    </kinetics>
</comment>
<comment type="induction">
    <text evidence="4">Constitutively expressed.</text>
</comment>
<comment type="similarity">
    <text evidence="3">Belongs to the class I-like SAM-binding methyltransferase superfamily. Cation-independent O-methyltransferase family. COMT subfamily.</text>
</comment>
<gene>
    <name evidence="7" type="primary">BMT</name>
</gene>
<keyword id="KW-0489">Methyltransferase</keyword>
<keyword id="KW-0949">S-adenosyl-L-methionine</keyword>
<keyword id="KW-0808">Transferase</keyword>